<sequence>MLLLPPRPPHPRSSSPEAMDPPPPKAPPFPKAEGPSSTPSSAAGPRPPRLGRHLLIDANGVPYTYTVQLEEEPRGPPQREAPPGEPGPRKGYSCPECARVFASPLRLQSHRVSHSDLKPFTCGACGKAFKRSSHLSRHRATHRARAGPPHTCPLCPRRFQDAAELAQHVRLH</sequence>
<accession>Q9UK33</accession>
<accession>B2RC05</accession>
<accession>Q9NPP7</accession>
<reference key="1">
    <citation type="submission" date="1999-09" db="EMBL/GenBank/DDBJ databases">
        <title>A novel gene associated with LDL stimulation in vascular endothelial cells.</title>
        <authorList>
            <person name="Zhang W.C."/>
            <person name="Zhang K.M."/>
            <person name="Chen B.S."/>
        </authorList>
    </citation>
    <scope>NUCLEOTIDE SEQUENCE [MRNA]</scope>
    <source>
        <tissue>Vascular endothelial cell</tissue>
    </source>
</reference>
<reference key="2">
    <citation type="submission" date="2000-07" db="EMBL/GenBank/DDBJ databases">
        <authorList>
            <consortium name="The European IMAGE consortium"/>
        </authorList>
    </citation>
    <scope>NUCLEOTIDE SEQUENCE [LARGE SCALE MRNA]</scope>
</reference>
<reference key="3">
    <citation type="journal article" date="2004" name="Nat. Genet.">
        <title>Complete sequencing and characterization of 21,243 full-length human cDNAs.</title>
        <authorList>
            <person name="Ota T."/>
            <person name="Suzuki Y."/>
            <person name="Nishikawa T."/>
            <person name="Otsuki T."/>
            <person name="Sugiyama T."/>
            <person name="Irie R."/>
            <person name="Wakamatsu A."/>
            <person name="Hayashi K."/>
            <person name="Sato H."/>
            <person name="Nagai K."/>
            <person name="Kimura K."/>
            <person name="Makita H."/>
            <person name="Sekine M."/>
            <person name="Obayashi M."/>
            <person name="Nishi T."/>
            <person name="Shibahara T."/>
            <person name="Tanaka T."/>
            <person name="Ishii S."/>
            <person name="Yamamoto J."/>
            <person name="Saito K."/>
            <person name="Kawai Y."/>
            <person name="Isono Y."/>
            <person name="Nakamura Y."/>
            <person name="Nagahari K."/>
            <person name="Murakami K."/>
            <person name="Yasuda T."/>
            <person name="Iwayanagi T."/>
            <person name="Wagatsuma M."/>
            <person name="Shiratori A."/>
            <person name="Sudo H."/>
            <person name="Hosoiri T."/>
            <person name="Kaku Y."/>
            <person name="Kodaira H."/>
            <person name="Kondo H."/>
            <person name="Sugawara M."/>
            <person name="Takahashi M."/>
            <person name="Kanda K."/>
            <person name="Yokoi T."/>
            <person name="Furuya T."/>
            <person name="Kikkawa E."/>
            <person name="Omura Y."/>
            <person name="Abe K."/>
            <person name="Kamihara K."/>
            <person name="Katsuta N."/>
            <person name="Sato K."/>
            <person name="Tanikawa M."/>
            <person name="Yamazaki M."/>
            <person name="Ninomiya K."/>
            <person name="Ishibashi T."/>
            <person name="Yamashita H."/>
            <person name="Murakawa K."/>
            <person name="Fujimori K."/>
            <person name="Tanai H."/>
            <person name="Kimata M."/>
            <person name="Watanabe M."/>
            <person name="Hiraoka S."/>
            <person name="Chiba Y."/>
            <person name="Ishida S."/>
            <person name="Ono Y."/>
            <person name="Takiguchi S."/>
            <person name="Watanabe S."/>
            <person name="Yosida M."/>
            <person name="Hotuta T."/>
            <person name="Kusano J."/>
            <person name="Kanehori K."/>
            <person name="Takahashi-Fujii A."/>
            <person name="Hara H."/>
            <person name="Tanase T.-O."/>
            <person name="Nomura Y."/>
            <person name="Togiya S."/>
            <person name="Komai F."/>
            <person name="Hara R."/>
            <person name="Takeuchi K."/>
            <person name="Arita M."/>
            <person name="Imose N."/>
            <person name="Musashino K."/>
            <person name="Yuuki H."/>
            <person name="Oshima A."/>
            <person name="Sasaki N."/>
            <person name="Aotsuka S."/>
            <person name="Yoshikawa Y."/>
            <person name="Matsunawa H."/>
            <person name="Ichihara T."/>
            <person name="Shiohata N."/>
            <person name="Sano S."/>
            <person name="Moriya S."/>
            <person name="Momiyama H."/>
            <person name="Satoh N."/>
            <person name="Takami S."/>
            <person name="Terashima Y."/>
            <person name="Suzuki O."/>
            <person name="Nakagawa S."/>
            <person name="Senoh A."/>
            <person name="Mizoguchi H."/>
            <person name="Goto Y."/>
            <person name="Shimizu F."/>
            <person name="Wakebe H."/>
            <person name="Hishigaki H."/>
            <person name="Watanabe T."/>
            <person name="Sugiyama A."/>
            <person name="Takemoto M."/>
            <person name="Kawakami B."/>
            <person name="Yamazaki M."/>
            <person name="Watanabe K."/>
            <person name="Kumagai A."/>
            <person name="Itakura S."/>
            <person name="Fukuzumi Y."/>
            <person name="Fujimori Y."/>
            <person name="Komiyama M."/>
            <person name="Tashiro H."/>
            <person name="Tanigami A."/>
            <person name="Fujiwara T."/>
            <person name="Ono T."/>
            <person name="Yamada K."/>
            <person name="Fujii Y."/>
            <person name="Ozaki K."/>
            <person name="Hirao M."/>
            <person name="Ohmori Y."/>
            <person name="Kawabata A."/>
            <person name="Hikiji T."/>
            <person name="Kobatake N."/>
            <person name="Inagaki H."/>
            <person name="Ikema Y."/>
            <person name="Okamoto S."/>
            <person name="Okitani R."/>
            <person name="Kawakami T."/>
            <person name="Noguchi S."/>
            <person name="Itoh T."/>
            <person name="Shigeta K."/>
            <person name="Senba T."/>
            <person name="Matsumura K."/>
            <person name="Nakajima Y."/>
            <person name="Mizuno T."/>
            <person name="Morinaga M."/>
            <person name="Sasaki M."/>
            <person name="Togashi T."/>
            <person name="Oyama M."/>
            <person name="Hata H."/>
            <person name="Watanabe M."/>
            <person name="Komatsu T."/>
            <person name="Mizushima-Sugano J."/>
            <person name="Satoh T."/>
            <person name="Shirai Y."/>
            <person name="Takahashi Y."/>
            <person name="Nakagawa K."/>
            <person name="Okumura K."/>
            <person name="Nagase T."/>
            <person name="Nomura N."/>
            <person name="Kikuchi H."/>
            <person name="Masuho Y."/>
            <person name="Yamashita R."/>
            <person name="Nakai K."/>
            <person name="Yada T."/>
            <person name="Nakamura Y."/>
            <person name="Ohara O."/>
            <person name="Isogai T."/>
            <person name="Sugano S."/>
        </authorList>
    </citation>
    <scope>NUCLEOTIDE SEQUENCE [LARGE SCALE MRNA]</scope>
</reference>
<reference key="4">
    <citation type="journal article" date="2004" name="Genome Res.">
        <title>The status, quality, and expansion of the NIH full-length cDNA project: the Mammalian Gene Collection (MGC).</title>
        <authorList>
            <consortium name="The MGC Project Team"/>
        </authorList>
    </citation>
    <scope>NUCLEOTIDE SEQUENCE [LARGE SCALE MRNA]</scope>
    <source>
        <tissue>Prostate</tissue>
    </source>
</reference>
<reference key="5">
    <citation type="journal article" date="2008" name="Proc. Natl. Acad. Sci. U.S.A.">
        <title>A quantitative atlas of mitotic phosphorylation.</title>
        <authorList>
            <person name="Dephoure N."/>
            <person name="Zhou C."/>
            <person name="Villen J."/>
            <person name="Beausoleil S.A."/>
            <person name="Bakalarski C.E."/>
            <person name="Elledge S.J."/>
            <person name="Gygi S.P."/>
        </authorList>
    </citation>
    <scope>IDENTIFICATION BY MASS SPECTROMETRY [LARGE SCALE ANALYSIS]</scope>
    <source>
        <tissue>Cervix carcinoma</tissue>
    </source>
</reference>
<reference key="6">
    <citation type="journal article" date="2010" name="Biochem. Biophys. Res. Commun.">
        <title>Sphingosine-1-phosphate induces human endothelial VEGF and MMP-2 production via transcription factor ZNF580: novel insights into angiogenesis.</title>
        <authorList>
            <person name="Sun H.Y."/>
            <person name="Wei S.P."/>
            <person name="Xu R.C."/>
            <person name="Xu P.X."/>
            <person name="Zhang W.C."/>
        </authorList>
    </citation>
    <scope>FUNCTION</scope>
    <scope>SUBCELLULAR LOCATION</scope>
    <scope>INDUCTION BY SPHINGOSINE-1-PHOSPHATE</scope>
</reference>
<reference key="7">
    <citation type="journal article" date="2011" name="Cell Biol. Int.">
        <title>ZNF580, a novel C2H2 zinc-finger transcription factor, interacts with the TGF-beta signal molecule Smad2.</title>
        <authorList>
            <person name="Luo Y."/>
            <person name="Hu W."/>
            <person name="Xu R."/>
            <person name="Hou B."/>
            <person name="Zhang L."/>
            <person name="Zhang W."/>
        </authorList>
    </citation>
    <scope>INTERACTION WITH SMAD2</scope>
    <scope>SUBCELLULAR LOCATION</scope>
    <scope>TISSUE SPECIFICITY</scope>
</reference>
<reference key="8">
    <citation type="journal article" date="2012" name="Mol. Cell. Biochem.">
        <title>ROS-induced ZNF580 expression: a key role for H2O2/NF-kappaB signaling pathway in vascular endothelial inflammation.</title>
        <authorList>
            <person name="DangLi R."/>
            <person name="HeKong W."/>
            <person name="JiQin L."/>
            <person name="MingHua Z."/>
            <person name="WenCheng Z."/>
        </authorList>
    </citation>
    <scope>FUNCTION</scope>
    <scope>INDUCTION BY REACTIVE OXYGEN SPECIES</scope>
</reference>
<reference key="9">
    <citation type="journal article" date="2013" name="J. Proteome Res.">
        <title>Toward a comprehensive characterization of a human cancer cell phosphoproteome.</title>
        <authorList>
            <person name="Zhou H."/>
            <person name="Di Palma S."/>
            <person name="Preisinger C."/>
            <person name="Peng M."/>
            <person name="Polat A.N."/>
            <person name="Heck A.J."/>
            <person name="Mohammed S."/>
        </authorList>
    </citation>
    <scope>IDENTIFICATION BY MASS SPECTROMETRY [LARGE SCALE ANALYSIS]</scope>
    <source>
        <tissue>Cervix carcinoma</tissue>
        <tissue>Erythroleukemia</tissue>
    </source>
</reference>
<reference key="10">
    <citation type="journal article" date="2017" name="Nat. Struct. Mol. Biol.">
        <title>Site-specific mapping of the human SUMO proteome reveals co-modification with phosphorylation.</title>
        <authorList>
            <person name="Hendriks I.A."/>
            <person name="Lyon D."/>
            <person name="Young C."/>
            <person name="Jensen L.J."/>
            <person name="Vertegaal A.C."/>
            <person name="Nielsen M.L."/>
        </authorList>
    </citation>
    <scope>SUMOYLATION [LARGE SCALE ANALYSIS] AT LYS-31 AND LYS-118</scope>
    <scope>IDENTIFICATION BY MASS SPECTROMETRY [LARGE SCALE ANALYSIS]</scope>
</reference>
<name>ZN580_HUMAN</name>
<proteinExistence type="evidence at protein level"/>
<protein>
    <recommendedName>
        <fullName>Zinc finger protein 580</fullName>
    </recommendedName>
    <alternativeName>
        <fullName>LDL-induced EC protein</fullName>
    </alternativeName>
</protein>
<keyword id="KW-0145">Chemotaxis</keyword>
<keyword id="KW-0238">DNA-binding</keyword>
<keyword id="KW-0395">Inflammatory response</keyword>
<keyword id="KW-1017">Isopeptide bond</keyword>
<keyword id="KW-0479">Metal-binding</keyword>
<keyword id="KW-0539">Nucleus</keyword>
<keyword id="KW-1267">Proteomics identification</keyword>
<keyword id="KW-1185">Reference proteome</keyword>
<keyword id="KW-0677">Repeat</keyword>
<keyword id="KW-0804">Transcription</keyword>
<keyword id="KW-0805">Transcription regulation</keyword>
<keyword id="KW-0832">Ubl conjugation</keyword>
<keyword id="KW-0862">Zinc</keyword>
<keyword id="KW-0863">Zinc-finger</keyword>
<gene>
    <name type="primary">ZNF580</name>
</gene>
<feature type="chain" id="PRO_0000047671" description="Zinc finger protein 580">
    <location>
        <begin position="1"/>
        <end position="172"/>
    </location>
</feature>
<feature type="zinc finger region" description="C2H2-type 1" evidence="1">
    <location>
        <begin position="92"/>
        <end position="114"/>
    </location>
</feature>
<feature type="zinc finger region" description="C2H2-type 2" evidence="1">
    <location>
        <begin position="120"/>
        <end position="142"/>
    </location>
</feature>
<feature type="zinc finger region" description="C2H2-type 3" evidence="1">
    <location>
        <begin position="150"/>
        <end position="172"/>
    </location>
</feature>
<feature type="region of interest" description="Disordered" evidence="2">
    <location>
        <begin position="1"/>
        <end position="93"/>
    </location>
</feature>
<feature type="compositionally biased region" description="Pro residues" evidence="2">
    <location>
        <begin position="19"/>
        <end position="30"/>
    </location>
</feature>
<feature type="compositionally biased region" description="Low complexity" evidence="2">
    <location>
        <begin position="31"/>
        <end position="44"/>
    </location>
</feature>
<feature type="compositionally biased region" description="Pro residues" evidence="2">
    <location>
        <begin position="75"/>
        <end position="86"/>
    </location>
</feature>
<feature type="cross-link" description="Glycyl lysine isopeptide (Lys-Gly) (interchain with G-Cter in SUMO2)" evidence="7">
    <location>
        <position position="31"/>
    </location>
</feature>
<feature type="cross-link" description="Glycyl lysine isopeptide (Lys-Gly) (interchain with G-Cter in SUMO2)" evidence="7">
    <location>
        <position position="118"/>
    </location>
</feature>
<dbReference type="EMBL" id="AF184939">
    <property type="protein sequence ID" value="AAD56549.1"/>
    <property type="molecule type" value="mRNA"/>
</dbReference>
<dbReference type="EMBL" id="AL359054">
    <property type="protein sequence ID" value="CAB94389.1"/>
    <property type="status" value="ALT_INIT"/>
    <property type="molecule type" value="mRNA"/>
</dbReference>
<dbReference type="EMBL" id="AK314888">
    <property type="protein sequence ID" value="BAG37402.1"/>
    <property type="molecule type" value="mRNA"/>
</dbReference>
<dbReference type="EMBL" id="BC017698">
    <property type="protein sequence ID" value="AAH17698.1"/>
    <property type="molecule type" value="mRNA"/>
</dbReference>
<dbReference type="CCDS" id="CCDS12931.1"/>
<dbReference type="RefSeq" id="NP_001156895.1">
    <property type="nucleotide sequence ID" value="NM_001163423.2"/>
</dbReference>
<dbReference type="RefSeq" id="NP_057286.1">
    <property type="nucleotide sequence ID" value="NM_016202.2"/>
</dbReference>
<dbReference type="RefSeq" id="NP_996998.1">
    <property type="nucleotide sequence ID" value="NM_207115.2"/>
</dbReference>
<dbReference type="SMR" id="Q9UK33"/>
<dbReference type="BioGRID" id="119340">
    <property type="interactions" value="31"/>
</dbReference>
<dbReference type="FunCoup" id="Q9UK33">
    <property type="interactions" value="604"/>
</dbReference>
<dbReference type="IntAct" id="Q9UK33">
    <property type="interactions" value="25"/>
</dbReference>
<dbReference type="MINT" id="Q9UK33"/>
<dbReference type="GlyGen" id="Q9UK33">
    <property type="glycosylation" value="1 site"/>
</dbReference>
<dbReference type="iPTMnet" id="Q9UK33"/>
<dbReference type="PhosphoSitePlus" id="Q9UK33"/>
<dbReference type="BioMuta" id="ZNF580"/>
<dbReference type="DMDM" id="55976777"/>
<dbReference type="jPOST" id="Q9UK33"/>
<dbReference type="MassIVE" id="Q9UK33"/>
<dbReference type="PaxDb" id="9606-ENSP00000443957"/>
<dbReference type="PeptideAtlas" id="Q9UK33"/>
<dbReference type="ProteomicsDB" id="84713"/>
<dbReference type="Pumba" id="Q9UK33"/>
<dbReference type="Antibodypedia" id="19580">
    <property type="antibodies" value="82 antibodies from 14 providers"/>
</dbReference>
<dbReference type="DNASU" id="51157"/>
<dbReference type="Ensembl" id="ENST00000325333.10">
    <property type="protein sequence ID" value="ENSP00000320050.4"/>
    <property type="gene ID" value="ENSG00000213015.9"/>
</dbReference>
<dbReference type="Ensembl" id="ENST00000543039.2">
    <property type="protein sequence ID" value="ENSP00000443957.1"/>
    <property type="gene ID" value="ENSG00000213015.9"/>
</dbReference>
<dbReference type="Ensembl" id="ENST00000545125.1">
    <property type="protein sequence ID" value="ENSP00000446126.1"/>
    <property type="gene ID" value="ENSG00000213015.9"/>
</dbReference>
<dbReference type="GeneID" id="51157"/>
<dbReference type="KEGG" id="hsa:51157"/>
<dbReference type="MANE-Select" id="ENST00000325333.10">
    <property type="protein sequence ID" value="ENSP00000320050.4"/>
    <property type="RefSeq nucleotide sequence ID" value="NM_207115.2"/>
    <property type="RefSeq protein sequence ID" value="NP_996998.1"/>
</dbReference>
<dbReference type="UCSC" id="uc002qlo.4">
    <property type="organism name" value="human"/>
</dbReference>
<dbReference type="AGR" id="HGNC:29473"/>
<dbReference type="CTD" id="51157"/>
<dbReference type="DisGeNET" id="51157"/>
<dbReference type="GeneCards" id="ZNF580"/>
<dbReference type="HGNC" id="HGNC:29473">
    <property type="gene designation" value="ZNF580"/>
</dbReference>
<dbReference type="HPA" id="ENSG00000213015">
    <property type="expression patterns" value="Low tissue specificity"/>
</dbReference>
<dbReference type="MIM" id="617888">
    <property type="type" value="gene"/>
</dbReference>
<dbReference type="neXtProt" id="NX_Q9UK33"/>
<dbReference type="OpenTargets" id="ENSG00000213015"/>
<dbReference type="PharmGKB" id="PA134867016"/>
<dbReference type="VEuPathDB" id="HostDB:ENSG00000213015"/>
<dbReference type="eggNOG" id="KOG1721">
    <property type="taxonomic scope" value="Eukaryota"/>
</dbReference>
<dbReference type="GeneTree" id="ENSGT00940000163086"/>
<dbReference type="HOGENOM" id="CLU_002678_42_5_1"/>
<dbReference type="InParanoid" id="Q9UK33"/>
<dbReference type="OMA" id="VWPRVGF"/>
<dbReference type="OrthoDB" id="3437960at2759"/>
<dbReference type="PAN-GO" id="Q9UK33">
    <property type="GO annotations" value="4 GO annotations based on evolutionary models"/>
</dbReference>
<dbReference type="PhylomeDB" id="Q9UK33"/>
<dbReference type="TreeFam" id="TF338348"/>
<dbReference type="PathwayCommons" id="Q9UK33"/>
<dbReference type="SignaLink" id="Q9UK33"/>
<dbReference type="BioGRID-ORCS" id="51157">
    <property type="hits" value="35 hits in 1178 CRISPR screens"/>
</dbReference>
<dbReference type="ChiTaRS" id="ZNF580">
    <property type="organism name" value="human"/>
</dbReference>
<dbReference type="GenomeRNAi" id="51157"/>
<dbReference type="Pharos" id="Q9UK33">
    <property type="development level" value="Tbio"/>
</dbReference>
<dbReference type="PRO" id="PR:Q9UK33"/>
<dbReference type="Proteomes" id="UP000005640">
    <property type="component" value="Chromosome 19"/>
</dbReference>
<dbReference type="RNAct" id="Q9UK33">
    <property type="molecule type" value="protein"/>
</dbReference>
<dbReference type="Bgee" id="ENSG00000213015">
    <property type="expression patterns" value="Expressed in adenohypophysis and 179 other cell types or tissues"/>
</dbReference>
<dbReference type="ExpressionAtlas" id="Q9UK33">
    <property type="expression patterns" value="baseline and differential"/>
</dbReference>
<dbReference type="GO" id="GO:0000785">
    <property type="term" value="C:chromatin"/>
    <property type="evidence" value="ECO:0000247"/>
    <property type="project" value="NTNU_SB"/>
</dbReference>
<dbReference type="GO" id="GO:0005654">
    <property type="term" value="C:nucleoplasm"/>
    <property type="evidence" value="ECO:0000314"/>
    <property type="project" value="HPA"/>
</dbReference>
<dbReference type="GO" id="GO:0005634">
    <property type="term" value="C:nucleus"/>
    <property type="evidence" value="ECO:0000314"/>
    <property type="project" value="UniProtKB"/>
</dbReference>
<dbReference type="GO" id="GO:0001228">
    <property type="term" value="F:DNA-binding transcription activator activity, RNA polymerase II-specific"/>
    <property type="evidence" value="ECO:0000318"/>
    <property type="project" value="GO_Central"/>
</dbReference>
<dbReference type="GO" id="GO:0000981">
    <property type="term" value="F:DNA-binding transcription factor activity, RNA polymerase II-specific"/>
    <property type="evidence" value="ECO:0000247"/>
    <property type="project" value="NTNU_SB"/>
</dbReference>
<dbReference type="GO" id="GO:0000978">
    <property type="term" value="F:RNA polymerase II cis-regulatory region sequence-specific DNA binding"/>
    <property type="evidence" value="ECO:0000318"/>
    <property type="project" value="GO_Central"/>
</dbReference>
<dbReference type="GO" id="GO:1990837">
    <property type="term" value="F:sequence-specific double-stranded DNA binding"/>
    <property type="evidence" value="ECO:0000314"/>
    <property type="project" value="ARUK-UCL"/>
</dbReference>
<dbReference type="GO" id="GO:0008270">
    <property type="term" value="F:zinc ion binding"/>
    <property type="evidence" value="ECO:0007669"/>
    <property type="project" value="UniProtKB-KW"/>
</dbReference>
<dbReference type="GO" id="GO:0070301">
    <property type="term" value="P:cellular response to hydrogen peroxide"/>
    <property type="evidence" value="ECO:0000314"/>
    <property type="project" value="UniProtKB"/>
</dbReference>
<dbReference type="GO" id="GO:0006935">
    <property type="term" value="P:chemotaxis"/>
    <property type="evidence" value="ECO:0007669"/>
    <property type="project" value="UniProtKB-KW"/>
</dbReference>
<dbReference type="GO" id="GO:0006954">
    <property type="term" value="P:inflammatory response"/>
    <property type="evidence" value="ECO:0007669"/>
    <property type="project" value="UniProtKB-KW"/>
</dbReference>
<dbReference type="GO" id="GO:0010595">
    <property type="term" value="P:positive regulation of endothelial cell migration"/>
    <property type="evidence" value="ECO:0000314"/>
    <property type="project" value="UniProtKB"/>
</dbReference>
<dbReference type="GO" id="GO:0001938">
    <property type="term" value="P:positive regulation of endothelial cell proliferation"/>
    <property type="evidence" value="ECO:0000314"/>
    <property type="project" value="UniProtKB"/>
</dbReference>
<dbReference type="GO" id="GO:0010628">
    <property type="term" value="P:positive regulation of gene expression"/>
    <property type="evidence" value="ECO:0000314"/>
    <property type="project" value="UniProtKB"/>
</dbReference>
<dbReference type="GO" id="GO:0032757">
    <property type="term" value="P:positive regulation of interleukin-8 production"/>
    <property type="evidence" value="ECO:0000314"/>
    <property type="project" value="UniProtKB"/>
</dbReference>
<dbReference type="GO" id="GO:0002690">
    <property type="term" value="P:positive regulation of leukocyte chemotaxis"/>
    <property type="evidence" value="ECO:0000314"/>
    <property type="project" value="UniProtKB"/>
</dbReference>
<dbReference type="GO" id="GO:0006357">
    <property type="term" value="P:regulation of transcription by RNA polymerase II"/>
    <property type="evidence" value="ECO:0000318"/>
    <property type="project" value="GO_Central"/>
</dbReference>
<dbReference type="FunFam" id="3.30.160.60:FF:000340">
    <property type="entry name" value="zinc finger protein 473 isoform X1"/>
    <property type="match status" value="1"/>
</dbReference>
<dbReference type="FunFam" id="3.30.160.60:FF:001357">
    <property type="entry name" value="Zinc finger protein 580"/>
    <property type="match status" value="1"/>
</dbReference>
<dbReference type="Gene3D" id="3.30.160.60">
    <property type="entry name" value="Classic Zinc Finger"/>
    <property type="match status" value="2"/>
</dbReference>
<dbReference type="InterPro" id="IPR036236">
    <property type="entry name" value="Znf_C2H2_sf"/>
</dbReference>
<dbReference type="InterPro" id="IPR013087">
    <property type="entry name" value="Znf_C2H2_type"/>
</dbReference>
<dbReference type="PANTHER" id="PTHR23235">
    <property type="entry name" value="KRUEPPEL-LIKE TRANSCRIPTION FACTOR"/>
    <property type="match status" value="1"/>
</dbReference>
<dbReference type="PANTHER" id="PTHR23235:SF120">
    <property type="entry name" value="KRUPPEL-LIKE FACTOR 15"/>
    <property type="match status" value="1"/>
</dbReference>
<dbReference type="Pfam" id="PF00096">
    <property type="entry name" value="zf-C2H2"/>
    <property type="match status" value="2"/>
</dbReference>
<dbReference type="SMART" id="SM00355">
    <property type="entry name" value="ZnF_C2H2"/>
    <property type="match status" value="3"/>
</dbReference>
<dbReference type="SUPFAM" id="SSF57667">
    <property type="entry name" value="beta-beta-alpha zinc fingers"/>
    <property type="match status" value="2"/>
</dbReference>
<dbReference type="PROSITE" id="PS00028">
    <property type="entry name" value="ZINC_FINGER_C2H2_1"/>
    <property type="match status" value="3"/>
</dbReference>
<dbReference type="PROSITE" id="PS50157">
    <property type="entry name" value="ZINC_FINGER_C2H2_2"/>
    <property type="match status" value="3"/>
</dbReference>
<organism>
    <name type="scientific">Homo sapiens</name>
    <name type="common">Human</name>
    <dbReference type="NCBI Taxonomy" id="9606"/>
    <lineage>
        <taxon>Eukaryota</taxon>
        <taxon>Metazoa</taxon>
        <taxon>Chordata</taxon>
        <taxon>Craniata</taxon>
        <taxon>Vertebrata</taxon>
        <taxon>Euteleostomi</taxon>
        <taxon>Mammalia</taxon>
        <taxon>Eutheria</taxon>
        <taxon>Euarchontoglires</taxon>
        <taxon>Primates</taxon>
        <taxon>Haplorrhini</taxon>
        <taxon>Catarrhini</taxon>
        <taxon>Hominidae</taxon>
        <taxon>Homo</taxon>
    </lineage>
</organism>
<comment type="function">
    <text evidence="3 5">Involved in the regulation of endothelial cell proliferation and migration. Mediates H(2)O(2)-induced leukocyte chemotaxis by elevating interleukin-8 production and may play a role in inflammation. May be involved in transcriptional regulation.</text>
</comment>
<comment type="subunit">
    <text evidence="4">Interacts with SMAD2.</text>
</comment>
<comment type="interaction">
    <interactant intactId="EBI-746277">
        <id>Q9UK33</id>
    </interactant>
    <interactant intactId="EBI-11524452">
        <id>Q8N9N5-2</id>
        <label>BANP</label>
    </interactant>
    <organismsDiffer>false</organismsDiffer>
    <experiments>3</experiments>
</comment>
<comment type="interaction">
    <interactant intactId="EBI-746277">
        <id>Q9UK33</id>
    </interactant>
    <interactant intactId="EBI-3867333">
        <id>A8MQ03</id>
        <label>CYSRT1</label>
    </interactant>
    <organismsDiffer>false</organismsDiffer>
    <experiments>3</experiments>
</comment>
<comment type="interaction">
    <interactant intactId="EBI-746277">
        <id>Q9UK33</id>
    </interactant>
    <interactant intactId="EBI-5661036">
        <id>A1L4K1</id>
        <label>FSD2</label>
    </interactant>
    <organismsDiffer>false</organismsDiffer>
    <experiments>3</experiments>
</comment>
<comment type="interaction">
    <interactant intactId="EBI-746277">
        <id>Q9UK33</id>
    </interactant>
    <interactant intactId="EBI-5916454">
        <id>A6NEM1</id>
        <label>GOLGA6L9</label>
    </interactant>
    <organismsDiffer>false</organismsDiffer>
    <experiments>3</experiments>
</comment>
<comment type="interaction">
    <interactant intactId="EBI-746277">
        <id>Q9UK33</id>
    </interactant>
    <interactant intactId="EBI-11522367">
        <id>Q13422-7</id>
        <label>IKZF1</label>
    </interactant>
    <organismsDiffer>false</organismsDiffer>
    <experiments>3</experiments>
</comment>
<comment type="interaction">
    <interactant intactId="EBI-746277">
        <id>Q9UK33</id>
    </interactant>
    <interactant intactId="EBI-722504">
        <id>O75525</id>
        <label>KHDRBS3</label>
    </interactant>
    <organismsDiffer>false</organismsDiffer>
    <experiments>3</experiments>
</comment>
<comment type="interaction">
    <interactant intactId="EBI-746277">
        <id>Q9UK33</id>
    </interactant>
    <interactant intactId="EBI-3044087">
        <id>Q7Z3Y8</id>
        <label>KRT27</label>
    </interactant>
    <organismsDiffer>false</organismsDiffer>
    <experiments>3</experiments>
</comment>
<comment type="interaction">
    <interactant intactId="EBI-746277">
        <id>Q9UK33</id>
    </interactant>
    <interactant intactId="EBI-1047093">
        <id>O76011</id>
        <label>KRT34</label>
    </interactant>
    <organismsDiffer>false</organismsDiffer>
    <experiments>3</experiments>
</comment>
<comment type="interaction">
    <interactant intactId="EBI-746277">
        <id>Q9UK33</id>
    </interactant>
    <interactant intactId="EBI-10171697">
        <id>Q6A162</id>
        <label>KRT40</label>
    </interactant>
    <organismsDiffer>false</organismsDiffer>
    <experiments>3</experiments>
</comment>
<comment type="interaction">
    <interactant intactId="EBI-746277">
        <id>Q9UK33</id>
    </interactant>
    <interactant intactId="EBI-10172290">
        <id>P60409</id>
        <label>KRTAP10-7</label>
    </interactant>
    <organismsDiffer>false</organismsDiffer>
    <experiments>3</experiments>
</comment>
<comment type="interaction">
    <interactant intactId="EBI-746277">
        <id>Q9UK33</id>
    </interactant>
    <interactant intactId="EBI-10171774">
        <id>P60410</id>
        <label>KRTAP10-8</label>
    </interactant>
    <organismsDiffer>false</organismsDiffer>
    <experiments>3</experiments>
</comment>
<comment type="interaction">
    <interactant intactId="EBI-746277">
        <id>Q9UK33</id>
    </interactant>
    <interactant intactId="EBI-724076">
        <id>Q99750</id>
        <label>MDFI</label>
    </interactant>
    <organismsDiffer>false</organismsDiffer>
    <experiments>3</experiments>
</comment>
<comment type="interaction">
    <interactant intactId="EBI-746277">
        <id>Q9UK33</id>
    </interactant>
    <interactant intactId="EBI-11522433">
        <id>Q5JR59-3</id>
        <label>MTUS2</label>
    </interactant>
    <organismsDiffer>false</organismsDiffer>
    <experiments>3</experiments>
</comment>
<comment type="interaction">
    <interactant intactId="EBI-746277">
        <id>Q9UK33</id>
    </interactant>
    <interactant intactId="EBI-22310682">
        <id>P0DPK4</id>
        <label>NOTCH2NLC</label>
    </interactant>
    <organismsDiffer>false</organismsDiffer>
    <experiments>3</experiments>
</comment>
<comment type="interaction">
    <interactant intactId="EBI-746277">
        <id>Q9UK33</id>
    </interactant>
    <interactant intactId="EBI-1050964">
        <id>O43586</id>
        <label>PSTPIP1</label>
    </interactant>
    <organismsDiffer>false</organismsDiffer>
    <experiments>3</experiments>
</comment>
<comment type="interaction">
    <interactant intactId="EBI-746277">
        <id>Q9UK33</id>
    </interactant>
    <interactant intactId="EBI-719493">
        <id>P14373</id>
        <label>TRIM27</label>
    </interactant>
    <organismsDiffer>false</organismsDiffer>
    <experiments>3</experiments>
</comment>
<comment type="interaction">
    <interactant intactId="EBI-746277">
        <id>Q9UK33</id>
    </interactant>
    <interactant intactId="EBI-742327">
        <id>Q15654</id>
        <label>TRIP6</label>
    </interactant>
    <organismsDiffer>false</organismsDiffer>
    <experiments>3</experiments>
</comment>
<comment type="interaction">
    <interactant intactId="EBI-746277">
        <id>Q9UK33</id>
    </interactant>
    <interactant intactId="EBI-8489702">
        <id>Q9C0F3</id>
        <label>ZNF436</label>
    </interactant>
    <organismsDiffer>false</organismsDiffer>
    <experiments>3</experiments>
</comment>
<comment type="subcellular location">
    <subcellularLocation>
        <location evidence="3 4">Nucleus</location>
    </subcellularLocation>
    <text>Colocalized with SMAD2 in the nucleus.</text>
</comment>
<comment type="tissue specificity">
    <text evidence="4">Expressed in endothelial cells.</text>
</comment>
<comment type="induction">
    <text evidence="3 5">Up-regulated in presence of reactive oxygen species (ROS), like H(2)O(2), through the NF-kappaB signaling pathway. Up-regulated by sphingosine-1-phosphate (SP1) through the p38 MAPK signaling pathway (at protein level).</text>
</comment>
<comment type="sequence caution" evidence="6">
    <conflict type="erroneous initiation">
        <sequence resource="EMBL-CDS" id="CAB94389"/>
    </conflict>
    <text>Extended N-terminus.</text>
</comment>
<evidence type="ECO:0000255" key="1">
    <source>
        <dbReference type="PROSITE-ProRule" id="PRU00042"/>
    </source>
</evidence>
<evidence type="ECO:0000256" key="2">
    <source>
        <dbReference type="SAM" id="MobiDB-lite"/>
    </source>
</evidence>
<evidence type="ECO:0000269" key="3">
    <source>
    </source>
</evidence>
<evidence type="ECO:0000269" key="4">
    <source>
    </source>
</evidence>
<evidence type="ECO:0000269" key="5">
    <source>
    </source>
</evidence>
<evidence type="ECO:0000305" key="6"/>
<evidence type="ECO:0007744" key="7">
    <source>
    </source>
</evidence>